<proteinExistence type="inferred from homology"/>
<name>MOAA_RIPO1</name>
<gene>
    <name evidence="1" type="primary">moaA</name>
    <name type="ordered locus">PCC8801_1769</name>
</gene>
<feature type="chain" id="PRO_1000139317" description="GTP 3',8-cyclase">
    <location>
        <begin position="1"/>
        <end position="329"/>
    </location>
</feature>
<feature type="domain" description="Radical SAM core" evidence="2">
    <location>
        <begin position="1"/>
        <end position="229"/>
    </location>
</feature>
<feature type="binding site" evidence="1">
    <location>
        <position position="8"/>
    </location>
    <ligand>
        <name>GTP</name>
        <dbReference type="ChEBI" id="CHEBI:37565"/>
    </ligand>
</feature>
<feature type="binding site" evidence="1">
    <location>
        <position position="15"/>
    </location>
    <ligand>
        <name>[4Fe-4S] cluster</name>
        <dbReference type="ChEBI" id="CHEBI:49883"/>
        <label>1</label>
        <note>4Fe-4S-S-AdoMet</note>
    </ligand>
</feature>
<feature type="binding site" evidence="1">
    <location>
        <position position="19"/>
    </location>
    <ligand>
        <name>[4Fe-4S] cluster</name>
        <dbReference type="ChEBI" id="CHEBI:49883"/>
        <label>1</label>
        <note>4Fe-4S-S-AdoMet</note>
    </ligand>
</feature>
<feature type="binding site" evidence="1">
    <location>
        <position position="21"/>
    </location>
    <ligand>
        <name>S-adenosyl-L-methionine</name>
        <dbReference type="ChEBI" id="CHEBI:59789"/>
    </ligand>
</feature>
<feature type="binding site" evidence="1">
    <location>
        <position position="22"/>
    </location>
    <ligand>
        <name>[4Fe-4S] cluster</name>
        <dbReference type="ChEBI" id="CHEBI:49883"/>
        <label>1</label>
        <note>4Fe-4S-S-AdoMet</note>
    </ligand>
</feature>
<feature type="binding site" evidence="1">
    <location>
        <position position="60"/>
    </location>
    <ligand>
        <name>GTP</name>
        <dbReference type="ChEBI" id="CHEBI:37565"/>
    </ligand>
</feature>
<feature type="binding site" evidence="1">
    <location>
        <position position="64"/>
    </location>
    <ligand>
        <name>S-adenosyl-L-methionine</name>
        <dbReference type="ChEBI" id="CHEBI:59789"/>
    </ligand>
</feature>
<feature type="binding site" evidence="1">
    <location>
        <position position="91"/>
    </location>
    <ligand>
        <name>GTP</name>
        <dbReference type="ChEBI" id="CHEBI:37565"/>
    </ligand>
</feature>
<feature type="binding site" evidence="1">
    <location>
        <position position="115"/>
    </location>
    <ligand>
        <name>S-adenosyl-L-methionine</name>
        <dbReference type="ChEBI" id="CHEBI:59789"/>
    </ligand>
</feature>
<feature type="binding site" evidence="1">
    <location>
        <position position="155"/>
    </location>
    <ligand>
        <name>GTP</name>
        <dbReference type="ChEBI" id="CHEBI:37565"/>
    </ligand>
</feature>
<feature type="binding site" evidence="1">
    <location>
        <position position="189"/>
    </location>
    <ligand>
        <name>S-adenosyl-L-methionine</name>
        <dbReference type="ChEBI" id="CHEBI:59789"/>
    </ligand>
</feature>
<feature type="binding site" evidence="1">
    <location>
        <position position="252"/>
    </location>
    <ligand>
        <name>[4Fe-4S] cluster</name>
        <dbReference type="ChEBI" id="CHEBI:49883"/>
        <label>2</label>
        <note>4Fe-4S-substrate</note>
    </ligand>
</feature>
<feature type="binding site" evidence="1">
    <location>
        <position position="255"/>
    </location>
    <ligand>
        <name>[4Fe-4S] cluster</name>
        <dbReference type="ChEBI" id="CHEBI:49883"/>
        <label>2</label>
        <note>4Fe-4S-substrate</note>
    </ligand>
</feature>
<feature type="binding site" evidence="1">
    <location>
        <begin position="257"/>
        <end position="259"/>
    </location>
    <ligand>
        <name>GTP</name>
        <dbReference type="ChEBI" id="CHEBI:37565"/>
    </ligand>
</feature>
<feature type="binding site" evidence="1">
    <location>
        <position position="269"/>
    </location>
    <ligand>
        <name>[4Fe-4S] cluster</name>
        <dbReference type="ChEBI" id="CHEBI:49883"/>
        <label>2</label>
        <note>4Fe-4S-substrate</note>
    </ligand>
</feature>
<evidence type="ECO:0000255" key="1">
    <source>
        <dbReference type="HAMAP-Rule" id="MF_01225"/>
    </source>
</evidence>
<evidence type="ECO:0000255" key="2">
    <source>
        <dbReference type="PROSITE-ProRule" id="PRU01266"/>
    </source>
</evidence>
<dbReference type="EC" id="4.1.99.22" evidence="1"/>
<dbReference type="EMBL" id="CP001287">
    <property type="protein sequence ID" value="ACK65815.1"/>
    <property type="molecule type" value="Genomic_DNA"/>
</dbReference>
<dbReference type="RefSeq" id="WP_012595088.1">
    <property type="nucleotide sequence ID" value="NC_011726.1"/>
</dbReference>
<dbReference type="SMR" id="B7JWW6"/>
<dbReference type="STRING" id="41431.PCC8801_1769"/>
<dbReference type="KEGG" id="cyp:PCC8801_1769"/>
<dbReference type="eggNOG" id="COG2896">
    <property type="taxonomic scope" value="Bacteria"/>
</dbReference>
<dbReference type="HOGENOM" id="CLU_009273_0_1_3"/>
<dbReference type="OrthoDB" id="9763993at2"/>
<dbReference type="UniPathway" id="UPA00344"/>
<dbReference type="Proteomes" id="UP000008204">
    <property type="component" value="Chromosome"/>
</dbReference>
<dbReference type="GO" id="GO:0051539">
    <property type="term" value="F:4 iron, 4 sulfur cluster binding"/>
    <property type="evidence" value="ECO:0007669"/>
    <property type="project" value="UniProtKB-UniRule"/>
</dbReference>
<dbReference type="GO" id="GO:0061799">
    <property type="term" value="F:cyclic pyranopterin monophosphate synthase activity"/>
    <property type="evidence" value="ECO:0007669"/>
    <property type="project" value="TreeGrafter"/>
</dbReference>
<dbReference type="GO" id="GO:0061798">
    <property type="term" value="F:GTP 3',8'-cyclase activity"/>
    <property type="evidence" value="ECO:0007669"/>
    <property type="project" value="UniProtKB-UniRule"/>
</dbReference>
<dbReference type="GO" id="GO:0005525">
    <property type="term" value="F:GTP binding"/>
    <property type="evidence" value="ECO:0007669"/>
    <property type="project" value="UniProtKB-UniRule"/>
</dbReference>
<dbReference type="GO" id="GO:0046872">
    <property type="term" value="F:metal ion binding"/>
    <property type="evidence" value="ECO:0007669"/>
    <property type="project" value="UniProtKB-KW"/>
</dbReference>
<dbReference type="GO" id="GO:1904047">
    <property type="term" value="F:S-adenosyl-L-methionine binding"/>
    <property type="evidence" value="ECO:0007669"/>
    <property type="project" value="UniProtKB-UniRule"/>
</dbReference>
<dbReference type="GO" id="GO:0006777">
    <property type="term" value="P:Mo-molybdopterin cofactor biosynthetic process"/>
    <property type="evidence" value="ECO:0007669"/>
    <property type="project" value="UniProtKB-UniRule"/>
</dbReference>
<dbReference type="CDD" id="cd01335">
    <property type="entry name" value="Radical_SAM"/>
    <property type="match status" value="1"/>
</dbReference>
<dbReference type="CDD" id="cd21117">
    <property type="entry name" value="Twitch_MoaA"/>
    <property type="match status" value="1"/>
</dbReference>
<dbReference type="Gene3D" id="3.20.20.70">
    <property type="entry name" value="Aldolase class I"/>
    <property type="match status" value="1"/>
</dbReference>
<dbReference type="HAMAP" id="MF_01225_B">
    <property type="entry name" value="MoaA_B"/>
    <property type="match status" value="1"/>
</dbReference>
<dbReference type="InterPro" id="IPR013785">
    <property type="entry name" value="Aldolase_TIM"/>
</dbReference>
<dbReference type="InterPro" id="IPR006638">
    <property type="entry name" value="Elp3/MiaA/NifB-like_rSAM"/>
</dbReference>
<dbReference type="InterPro" id="IPR013483">
    <property type="entry name" value="MoaA"/>
</dbReference>
<dbReference type="InterPro" id="IPR000385">
    <property type="entry name" value="MoaA_NifB_PqqE_Fe-S-bd_CS"/>
</dbReference>
<dbReference type="InterPro" id="IPR010505">
    <property type="entry name" value="MoaA_twitch"/>
</dbReference>
<dbReference type="InterPro" id="IPR050105">
    <property type="entry name" value="MoCo_biosynth_MoaA/MoaC"/>
</dbReference>
<dbReference type="InterPro" id="IPR007197">
    <property type="entry name" value="rSAM"/>
</dbReference>
<dbReference type="NCBIfam" id="TIGR02666">
    <property type="entry name" value="moaA"/>
    <property type="match status" value="1"/>
</dbReference>
<dbReference type="PANTHER" id="PTHR22960:SF0">
    <property type="entry name" value="MOLYBDENUM COFACTOR BIOSYNTHESIS PROTEIN 1"/>
    <property type="match status" value="1"/>
</dbReference>
<dbReference type="PANTHER" id="PTHR22960">
    <property type="entry name" value="MOLYBDOPTERIN COFACTOR SYNTHESIS PROTEIN A"/>
    <property type="match status" value="1"/>
</dbReference>
<dbReference type="Pfam" id="PF13353">
    <property type="entry name" value="Fer4_12"/>
    <property type="match status" value="1"/>
</dbReference>
<dbReference type="Pfam" id="PF06463">
    <property type="entry name" value="Mob_synth_C"/>
    <property type="match status" value="1"/>
</dbReference>
<dbReference type="Pfam" id="PF04055">
    <property type="entry name" value="Radical_SAM"/>
    <property type="match status" value="1"/>
</dbReference>
<dbReference type="SFLD" id="SFLDG01383">
    <property type="entry name" value="cyclic_pyranopterin_phosphate"/>
    <property type="match status" value="1"/>
</dbReference>
<dbReference type="SFLD" id="SFLDG01072">
    <property type="entry name" value="dehydrogenase_like"/>
    <property type="match status" value="1"/>
</dbReference>
<dbReference type="SMART" id="SM00729">
    <property type="entry name" value="Elp3"/>
    <property type="match status" value="1"/>
</dbReference>
<dbReference type="SUPFAM" id="SSF102114">
    <property type="entry name" value="Radical SAM enzymes"/>
    <property type="match status" value="1"/>
</dbReference>
<dbReference type="PROSITE" id="PS01305">
    <property type="entry name" value="MOAA_NIFB_PQQE"/>
    <property type="match status" value="1"/>
</dbReference>
<dbReference type="PROSITE" id="PS51918">
    <property type="entry name" value="RADICAL_SAM"/>
    <property type="match status" value="1"/>
</dbReference>
<sequence length="329" mass="37343">MNPVDYLRISLIDRCNFRCQYCMPEGVKLDYILRSELLTDDELLTLIKAVFIPLGFTKFRLTGGEPLLRPGVVQLVRDIAALPQTEDLSMTTNGFLLSRMAKELYQAGLKRINISLDSLNQETFDKIIGNFGASKWQQTWEGIQTAYEVGFNPLKLNVVIIPGINEGEIEDLAALTIDRNWHVRFIEFMPIGNRELFSDRAWVPSEEIRQTIRQKWGLIESTIKGNGPADVFQIPGGKGTLGFISQMSECFCDRCNRMRLSADGWLRPCLLNETGQIDLKTALRQGIKTTELREQVREILAIKPNINYQERESGTQTGTYQRTMSQIGG</sequence>
<protein>
    <recommendedName>
        <fullName evidence="1">GTP 3',8-cyclase</fullName>
        <ecNumber evidence="1">4.1.99.22</ecNumber>
    </recommendedName>
    <alternativeName>
        <fullName evidence="1">Molybdenum cofactor biosynthesis protein A</fullName>
    </alternativeName>
</protein>
<comment type="function">
    <text evidence="1">Catalyzes the cyclization of GTP to (8S)-3',8-cyclo-7,8-dihydroguanosine 5'-triphosphate.</text>
</comment>
<comment type="catalytic activity">
    <reaction evidence="1">
        <text>GTP + AH2 + S-adenosyl-L-methionine = (8S)-3',8-cyclo-7,8-dihydroguanosine 5'-triphosphate + 5'-deoxyadenosine + L-methionine + A + H(+)</text>
        <dbReference type="Rhea" id="RHEA:49576"/>
        <dbReference type="ChEBI" id="CHEBI:13193"/>
        <dbReference type="ChEBI" id="CHEBI:15378"/>
        <dbReference type="ChEBI" id="CHEBI:17319"/>
        <dbReference type="ChEBI" id="CHEBI:17499"/>
        <dbReference type="ChEBI" id="CHEBI:37565"/>
        <dbReference type="ChEBI" id="CHEBI:57844"/>
        <dbReference type="ChEBI" id="CHEBI:59789"/>
        <dbReference type="ChEBI" id="CHEBI:131766"/>
        <dbReference type="EC" id="4.1.99.22"/>
    </reaction>
</comment>
<comment type="cofactor">
    <cofactor evidence="1">
        <name>[4Fe-4S] cluster</name>
        <dbReference type="ChEBI" id="CHEBI:49883"/>
    </cofactor>
    <text evidence="1">Binds 2 [4Fe-4S] clusters. Binds 1 [4Fe-4S] cluster coordinated with 3 cysteines and an exchangeable S-adenosyl-L-methionine and 1 [4Fe-4S] cluster coordinated with 3 cysteines and the GTP-derived substrate.</text>
</comment>
<comment type="pathway">
    <text evidence="1">Cofactor biosynthesis; molybdopterin biosynthesis.</text>
</comment>
<comment type="subunit">
    <text evidence="1">Monomer and homodimer.</text>
</comment>
<comment type="similarity">
    <text evidence="1">Belongs to the radical SAM superfamily. MoaA family.</text>
</comment>
<reference key="1">
    <citation type="journal article" date="2011" name="MBio">
        <title>Novel metabolic attributes of the genus Cyanothece, comprising a group of unicellular nitrogen-fixing Cyanobacteria.</title>
        <authorList>
            <person name="Bandyopadhyay A."/>
            <person name="Elvitigala T."/>
            <person name="Welsh E."/>
            <person name="Stockel J."/>
            <person name="Liberton M."/>
            <person name="Min H."/>
            <person name="Sherman L.A."/>
            <person name="Pakrasi H.B."/>
        </authorList>
    </citation>
    <scope>NUCLEOTIDE SEQUENCE [LARGE SCALE GENOMIC DNA]</scope>
    <source>
        <strain>PCC 8801 / RF-1</strain>
    </source>
</reference>
<keyword id="KW-0004">4Fe-4S</keyword>
<keyword id="KW-0342">GTP-binding</keyword>
<keyword id="KW-0408">Iron</keyword>
<keyword id="KW-0411">Iron-sulfur</keyword>
<keyword id="KW-0456">Lyase</keyword>
<keyword id="KW-0479">Metal-binding</keyword>
<keyword id="KW-0501">Molybdenum cofactor biosynthesis</keyword>
<keyword id="KW-0547">Nucleotide-binding</keyword>
<keyword id="KW-1185">Reference proteome</keyword>
<keyword id="KW-0949">S-adenosyl-L-methionine</keyword>
<organism>
    <name type="scientific">Rippkaea orientalis (strain PCC 8801 / RF-1)</name>
    <name type="common">Cyanothece sp. (strain PCC 8801)</name>
    <dbReference type="NCBI Taxonomy" id="41431"/>
    <lineage>
        <taxon>Bacteria</taxon>
        <taxon>Bacillati</taxon>
        <taxon>Cyanobacteriota</taxon>
        <taxon>Cyanophyceae</taxon>
        <taxon>Oscillatoriophycideae</taxon>
        <taxon>Chroococcales</taxon>
        <taxon>Aphanothecaceae</taxon>
        <taxon>Rippkaea</taxon>
        <taxon>Rippkaea orientalis</taxon>
    </lineage>
</organism>
<accession>B7JWW6</accession>